<protein>
    <recommendedName>
        <fullName>F-actin-capping protein subunit alpha-2</fullName>
    </recommendedName>
    <alternativeName>
        <fullName>CapZ alpha-2</fullName>
    </alternativeName>
</protein>
<name>CAZA2_RAT</name>
<organism>
    <name type="scientific">Rattus norvegicus</name>
    <name type="common">Rat</name>
    <dbReference type="NCBI Taxonomy" id="10116"/>
    <lineage>
        <taxon>Eukaryota</taxon>
        <taxon>Metazoa</taxon>
        <taxon>Chordata</taxon>
        <taxon>Craniata</taxon>
        <taxon>Vertebrata</taxon>
        <taxon>Euteleostomi</taxon>
        <taxon>Mammalia</taxon>
        <taxon>Eutheria</taxon>
        <taxon>Euarchontoglires</taxon>
        <taxon>Glires</taxon>
        <taxon>Rodentia</taxon>
        <taxon>Myomorpha</taxon>
        <taxon>Muroidea</taxon>
        <taxon>Muridae</taxon>
        <taxon>Murinae</taxon>
        <taxon>Rattus</taxon>
    </lineage>
</organism>
<feature type="initiator methionine" description="Removed" evidence="3">
    <location>
        <position position="1"/>
    </location>
</feature>
<feature type="chain" id="PRO_0000288478" description="F-actin-capping protein subunit alpha-2">
    <location>
        <begin position="2"/>
        <end position="286"/>
    </location>
</feature>
<feature type="modified residue" description="N-acetylalanine" evidence="3">
    <location>
        <position position="2"/>
    </location>
</feature>
<feature type="modified residue" description="Phosphoserine" evidence="5">
    <location>
        <position position="9"/>
    </location>
</feature>
<feature type="helix" evidence="6">
    <location>
        <begin position="271"/>
        <end position="275"/>
    </location>
</feature>
<comment type="function">
    <text evidence="1">F-actin-capping proteins bind in a Ca(2+)-independent manner to the fast growing ends of actin filaments (barbed end) thereby blocking the exchange of subunits at these ends. Unlike other capping proteins (such as gelsolin and severin), these proteins do not sever actin filaments (By similarity).</text>
</comment>
<comment type="subunit">
    <text evidence="1 2">Component of the F-actin capping complex, composed of a heterodimer of an alpha and a beta subunit. Component of the WASH complex, composed of F-actin-capping protein subunit alpha (CAPZA1, CAPZA2 or CAPZA3), F-actin-capping protein subunit beta (CAPZB), WASHC1, WASHC2, WASHC3, WASHC4 and WASHC5. Interacts with RCSD1/CAPZIP (By similarity). Directly interacts with CRACD; this interaction decreases binding to actin (By similarity).</text>
</comment>
<comment type="similarity">
    <text evidence="4">Belongs to the F-actin-capping protein alpha subunit family.</text>
</comment>
<keyword id="KW-0002">3D-structure</keyword>
<keyword id="KW-0007">Acetylation</keyword>
<keyword id="KW-0117">Actin capping</keyword>
<keyword id="KW-0009">Actin-binding</keyword>
<keyword id="KW-0903">Direct protein sequencing</keyword>
<keyword id="KW-0597">Phosphoprotein</keyword>
<keyword id="KW-1185">Reference proteome</keyword>
<proteinExistence type="evidence at protein level"/>
<accession>Q3T1K5</accession>
<dbReference type="EMBL" id="DP000027">
    <property type="protein sequence ID" value="AAR16310.1"/>
    <property type="molecule type" value="Genomic_DNA"/>
</dbReference>
<dbReference type="EMBL" id="BC101867">
    <property type="protein sequence ID" value="AAI01868.1"/>
    <property type="molecule type" value="mRNA"/>
</dbReference>
<dbReference type="RefSeq" id="NP_001009180.1">
    <property type="nucleotide sequence ID" value="NM_001009180.3"/>
</dbReference>
<dbReference type="PDB" id="2KBM">
    <property type="method" value="NMR"/>
    <property type="chains" value="X/Y=265-276"/>
</dbReference>
<dbReference type="PDBsum" id="2KBM"/>
<dbReference type="BMRB" id="Q3T1K5"/>
<dbReference type="SMR" id="Q3T1K5"/>
<dbReference type="BioGRID" id="268810">
    <property type="interactions" value="5"/>
</dbReference>
<dbReference type="FunCoup" id="Q3T1K5">
    <property type="interactions" value="3537"/>
</dbReference>
<dbReference type="IntAct" id="Q3T1K5">
    <property type="interactions" value="3"/>
</dbReference>
<dbReference type="MINT" id="Q3T1K5"/>
<dbReference type="STRING" id="10116.ENSRNOP00000072041"/>
<dbReference type="iPTMnet" id="Q3T1K5"/>
<dbReference type="PhosphoSitePlus" id="Q3T1K5"/>
<dbReference type="jPOST" id="Q3T1K5"/>
<dbReference type="PaxDb" id="10116-ENSRNOP00000037217"/>
<dbReference type="GeneID" id="493810"/>
<dbReference type="KEGG" id="rno:493810"/>
<dbReference type="UCSC" id="RGD:1549770">
    <property type="organism name" value="rat"/>
</dbReference>
<dbReference type="AGR" id="RGD:1549770"/>
<dbReference type="CTD" id="830"/>
<dbReference type="RGD" id="1549770">
    <property type="gene designation" value="Capza2"/>
</dbReference>
<dbReference type="VEuPathDB" id="HostDB:ENSRNOG00000056207"/>
<dbReference type="eggNOG" id="KOG0836">
    <property type="taxonomic scope" value="Eukaryota"/>
</dbReference>
<dbReference type="HOGENOM" id="CLU_045161_0_0_1"/>
<dbReference type="InParanoid" id="Q3T1K5"/>
<dbReference type="OrthoDB" id="17206at9989"/>
<dbReference type="PhylomeDB" id="Q3T1K5"/>
<dbReference type="TreeFam" id="TF314822"/>
<dbReference type="Reactome" id="R-RNO-2132295">
    <property type="pathway name" value="MHC class II antigen presentation"/>
</dbReference>
<dbReference type="Reactome" id="R-RNO-3371497">
    <property type="pathway name" value="HSP90 chaperone cycle for steroid hormone receptors (SHR) in the presence of ligand"/>
</dbReference>
<dbReference type="Reactome" id="R-RNO-6807878">
    <property type="pathway name" value="COPI-mediated anterograde transport"/>
</dbReference>
<dbReference type="Reactome" id="R-RNO-6811436">
    <property type="pathway name" value="COPI-independent Golgi-to-ER retrograde traffic"/>
</dbReference>
<dbReference type="Reactome" id="R-RNO-879415">
    <property type="pathway name" value="Advanced glycosylation endproduct receptor signaling"/>
</dbReference>
<dbReference type="Reactome" id="R-RNO-983231">
    <property type="pathway name" value="Factors involved in megakaryocyte development and platelet production"/>
</dbReference>
<dbReference type="EvolutionaryTrace" id="Q3T1K5"/>
<dbReference type="PRO" id="PR:Q3T1K5"/>
<dbReference type="Proteomes" id="UP000002494">
    <property type="component" value="Chromosome 4"/>
</dbReference>
<dbReference type="Bgee" id="ENSRNOG00000056207">
    <property type="expression patterns" value="Expressed in quadriceps femoris and 20 other cell types or tissues"/>
</dbReference>
<dbReference type="GO" id="GO:0005903">
    <property type="term" value="C:brush border"/>
    <property type="evidence" value="ECO:0000266"/>
    <property type="project" value="RGD"/>
</dbReference>
<dbReference type="GO" id="GO:0030863">
    <property type="term" value="C:cortical cytoskeleton"/>
    <property type="evidence" value="ECO:0000266"/>
    <property type="project" value="RGD"/>
</dbReference>
<dbReference type="GO" id="GO:0008290">
    <property type="term" value="C:F-actin capping protein complex"/>
    <property type="evidence" value="ECO:0000266"/>
    <property type="project" value="RGD"/>
</dbReference>
<dbReference type="GO" id="GO:0016020">
    <property type="term" value="C:membrane"/>
    <property type="evidence" value="ECO:0000266"/>
    <property type="project" value="RGD"/>
</dbReference>
<dbReference type="GO" id="GO:0051015">
    <property type="term" value="F:actin filament binding"/>
    <property type="evidence" value="ECO:0000318"/>
    <property type="project" value="GO_Central"/>
</dbReference>
<dbReference type="GO" id="GO:0030036">
    <property type="term" value="P:actin cytoskeleton organization"/>
    <property type="evidence" value="ECO:0000318"/>
    <property type="project" value="GO_Central"/>
</dbReference>
<dbReference type="GO" id="GO:0051016">
    <property type="term" value="P:barbed-end actin filament capping"/>
    <property type="evidence" value="ECO:0000318"/>
    <property type="project" value="GO_Central"/>
</dbReference>
<dbReference type="FunFam" id="3.30.1140.60:FF:000001">
    <property type="entry name" value="F-actin-capping protein subunit alpha"/>
    <property type="match status" value="1"/>
</dbReference>
<dbReference type="FunFam" id="3.90.1150.210:FF:000002">
    <property type="entry name" value="F-actin-capping protein subunit alpha"/>
    <property type="match status" value="1"/>
</dbReference>
<dbReference type="Gene3D" id="3.30.1140.60">
    <property type="entry name" value="F-actin capping protein, alpha subunit"/>
    <property type="match status" value="1"/>
</dbReference>
<dbReference type="Gene3D" id="3.90.1150.210">
    <property type="entry name" value="F-actin capping protein, beta subunit"/>
    <property type="match status" value="1"/>
</dbReference>
<dbReference type="InterPro" id="IPR002189">
    <property type="entry name" value="CapZ_alpha"/>
</dbReference>
<dbReference type="InterPro" id="IPR037282">
    <property type="entry name" value="CapZ_alpha/beta"/>
</dbReference>
<dbReference type="InterPro" id="IPR042276">
    <property type="entry name" value="CapZ_alpha/beta_2"/>
</dbReference>
<dbReference type="InterPro" id="IPR042489">
    <property type="entry name" value="CapZ_alpha_1"/>
</dbReference>
<dbReference type="InterPro" id="IPR017865">
    <property type="entry name" value="F-actin_cap_asu_CS"/>
</dbReference>
<dbReference type="PANTHER" id="PTHR10653">
    <property type="entry name" value="F-ACTIN-CAPPING PROTEIN SUBUNIT ALPHA"/>
    <property type="match status" value="1"/>
</dbReference>
<dbReference type="PANTHER" id="PTHR10653:SF2">
    <property type="entry name" value="F-ACTIN-CAPPING PROTEIN SUBUNIT ALPHA-2"/>
    <property type="match status" value="1"/>
</dbReference>
<dbReference type="Pfam" id="PF01267">
    <property type="entry name" value="F-actin_cap_A"/>
    <property type="match status" value="1"/>
</dbReference>
<dbReference type="PRINTS" id="PR00191">
    <property type="entry name" value="FACTINCAPA"/>
</dbReference>
<dbReference type="SUPFAM" id="SSF90096">
    <property type="entry name" value="Subunits of heterodimeric actin filament capping protein Capz"/>
    <property type="match status" value="1"/>
</dbReference>
<dbReference type="PROSITE" id="PS00748">
    <property type="entry name" value="F_ACTIN_CAPPING_A_1"/>
    <property type="match status" value="1"/>
</dbReference>
<dbReference type="PROSITE" id="PS00749">
    <property type="entry name" value="F_ACTIN_CAPPING_A_2"/>
    <property type="match status" value="1"/>
</dbReference>
<sequence>MADLEEQLSDEEKVRIAAKFIIHAPPGEFNEVFNDVRLLLNNDNLLREGAAHAFAQYNLDQFTPVKIEGYEDQVLITEHGDLGNGKFLDPKNRICFKFDHLRKEATDPRPYEAENAIESWRTSVETALRAYVKEHYPNGVCTVYGKKVDGQQTIIACIESHQFQAKNFWNGRWRSEWKFTVTPSTTQVVGILKIQVHYYEDGNVQLVSHKDIQDSLTVSNEVQTAKEFIKIVEAAENEYQTAISENYQTMSDTTFKALRRQLPVTRTKIDWNKILSYKIGKEMQNA</sequence>
<evidence type="ECO:0000250" key="1"/>
<evidence type="ECO:0000250" key="2">
    <source>
        <dbReference type="UniProtKB" id="P47755"/>
    </source>
</evidence>
<evidence type="ECO:0000269" key="3">
    <source ref="3"/>
</evidence>
<evidence type="ECO:0000305" key="4"/>
<evidence type="ECO:0007744" key="5">
    <source>
    </source>
</evidence>
<evidence type="ECO:0007829" key="6">
    <source>
        <dbReference type="PDB" id="2KBM"/>
    </source>
</evidence>
<gene>
    <name type="primary">Capza2</name>
</gene>
<reference key="1">
    <citation type="journal article" date="2003" name="Nature">
        <title>Comparative analyses of multi-species sequences from targeted genomic regions.</title>
        <authorList>
            <person name="Thomas J.W."/>
            <person name="Touchman J.W."/>
            <person name="Blakesley R.W."/>
            <person name="Bouffard G.G."/>
            <person name="Beckstrom-Sternberg S.M."/>
            <person name="Margulies E.H."/>
            <person name="Blanchette M."/>
            <person name="Siepel A.C."/>
            <person name="Thomas P.J."/>
            <person name="McDowell J.C."/>
            <person name="Maskeri B."/>
            <person name="Hansen N.F."/>
            <person name="Schwartz M.S."/>
            <person name="Weber R.J."/>
            <person name="Kent W.J."/>
            <person name="Karolchik D."/>
            <person name="Bruen T.C."/>
            <person name="Bevan R."/>
            <person name="Cutler D.J."/>
            <person name="Schwartz S."/>
            <person name="Elnitski L."/>
            <person name="Idol J.R."/>
            <person name="Prasad A.B."/>
            <person name="Lee-Lin S.-Q."/>
            <person name="Maduro V.V.B."/>
            <person name="Summers T.J."/>
            <person name="Portnoy M.E."/>
            <person name="Dietrich N.L."/>
            <person name="Akhter N."/>
            <person name="Ayele K."/>
            <person name="Benjamin B."/>
            <person name="Cariaga K."/>
            <person name="Brinkley C.P."/>
            <person name="Brooks S.Y."/>
            <person name="Granite S."/>
            <person name="Guan X."/>
            <person name="Gupta J."/>
            <person name="Haghighi P."/>
            <person name="Ho S.-L."/>
            <person name="Huang M.C."/>
            <person name="Karlins E."/>
            <person name="Laric P.L."/>
            <person name="Legaspi R."/>
            <person name="Lim M.J."/>
            <person name="Maduro Q.L."/>
            <person name="Masiello C.A."/>
            <person name="Mastrian S.D."/>
            <person name="McCloskey J.C."/>
            <person name="Pearson R."/>
            <person name="Stantripop S."/>
            <person name="Tiongson E.E."/>
            <person name="Tran J.T."/>
            <person name="Tsurgeon C."/>
            <person name="Vogt J.L."/>
            <person name="Walker M.A."/>
            <person name="Wetherby K.D."/>
            <person name="Wiggins L.S."/>
            <person name="Young A.C."/>
            <person name="Zhang L.-H."/>
            <person name="Osoegawa K."/>
            <person name="Zhu B."/>
            <person name="Zhao B."/>
            <person name="Shu C.L."/>
            <person name="De Jong P.J."/>
            <person name="Lawrence C.E."/>
            <person name="Smit A.F."/>
            <person name="Chakravarti A."/>
            <person name="Haussler D."/>
            <person name="Green P."/>
            <person name="Miller W."/>
            <person name="Green E.D."/>
        </authorList>
    </citation>
    <scope>NUCLEOTIDE SEQUENCE [LARGE SCALE GENOMIC DNA]</scope>
</reference>
<reference key="2">
    <citation type="journal article" date="2004" name="Genome Res.">
        <title>The status, quality, and expansion of the NIH full-length cDNA project: the Mammalian Gene Collection (MGC).</title>
        <authorList>
            <consortium name="The MGC Project Team"/>
        </authorList>
    </citation>
    <scope>NUCLEOTIDE SEQUENCE [LARGE SCALE MRNA]</scope>
    <source>
        <tissue>Prostate</tissue>
    </source>
</reference>
<reference key="3">
    <citation type="submission" date="2009-06" db="UniProtKB">
        <authorList>
            <person name="Bienvenut W.V."/>
            <person name="von Kriegsheim A."/>
            <person name="Kolch W."/>
        </authorList>
    </citation>
    <scope>PROTEIN SEQUENCE OF 2-15; 38-47 AND 122-129</scope>
    <scope>CLEAVAGE OF INITIATOR METHIONINE</scope>
    <scope>ACETYLATION AT ALA-2</scope>
    <scope>IDENTIFICATION BY MASS SPECTROMETRY</scope>
    <source>
        <tissue>Fibroblast</tissue>
    </source>
</reference>
<reference key="4">
    <citation type="submission" date="2007-04" db="UniProtKB">
        <authorList>
            <person name="Lubec G."/>
            <person name="Chen W.-Q."/>
        </authorList>
    </citation>
    <scope>PROTEIN SEQUENCE OF 20-37 AND 194-210</scope>
    <scope>IDENTIFICATION BY MASS SPECTROMETRY</scope>
    <source>
        <strain>Sprague-Dawley</strain>
        <tissue>Hippocampus</tissue>
    </source>
</reference>
<reference key="5">
    <citation type="journal article" date="2012" name="Nat. Commun.">
        <title>Quantitative maps of protein phosphorylation sites across 14 different rat organs and tissues.</title>
        <authorList>
            <person name="Lundby A."/>
            <person name="Secher A."/>
            <person name="Lage K."/>
            <person name="Nordsborg N.B."/>
            <person name="Dmytriyev A."/>
            <person name="Lundby C."/>
            <person name="Olsen J.V."/>
        </authorList>
    </citation>
    <scope>PHOSPHORYLATION [LARGE SCALE ANALYSIS] AT SER-9</scope>
    <scope>IDENTIFICATION BY MASS SPECTROMETRY [LARGE SCALE ANALYSIS]</scope>
</reference>